<accession>P86561</accession>
<reference evidence="3" key="1">
    <citation type="journal article" date="2009" name="Peptides">
        <title>Neuropeptides in Heteroptera: identification of allatotropin-related peptide and tachykinin-related peptides using MALDI-TOF mass spectrometry.</title>
        <authorList>
            <person name="Neupert S."/>
            <person name="Russell W.K."/>
            <person name="Russell D.H."/>
            <person name="Lopez J.D. Jr."/>
            <person name="Predel R."/>
            <person name="Nachman R.J."/>
        </authorList>
    </citation>
    <scope>PROTEIN SEQUENCE</scope>
    <scope>SUBCELLULAR LOCATION</scope>
    <scope>TISSUE SPECIFICITY</scope>
    <scope>AMIDATION AT ARG-10</scope>
    <source>
        <tissue evidence="1">Antennal lobe</tissue>
    </source>
</reference>
<proteinExistence type="evidence at protein level"/>
<dbReference type="GO" id="GO:0005576">
    <property type="term" value="C:extracellular region"/>
    <property type="evidence" value="ECO:0007005"/>
    <property type="project" value="UniProtKB"/>
</dbReference>
<dbReference type="GO" id="GO:0007218">
    <property type="term" value="P:neuropeptide signaling pathway"/>
    <property type="evidence" value="ECO:0007669"/>
    <property type="project" value="UniProtKB-KW"/>
</dbReference>
<sequence length="10" mass="1075">APLMGFQGVR</sequence>
<organism>
    <name type="scientific">Acrosternum hilare</name>
    <name type="common">Green stink bug</name>
    <name type="synonym">Nezara hilaris</name>
    <dbReference type="NCBI Taxonomy" id="244443"/>
    <lineage>
        <taxon>Eukaryota</taxon>
        <taxon>Metazoa</taxon>
        <taxon>Ecdysozoa</taxon>
        <taxon>Arthropoda</taxon>
        <taxon>Hexapoda</taxon>
        <taxon>Insecta</taxon>
        <taxon>Pterygota</taxon>
        <taxon>Neoptera</taxon>
        <taxon>Paraneoptera</taxon>
        <taxon>Hemiptera</taxon>
        <taxon>Heteroptera</taxon>
        <taxon>Panheteroptera</taxon>
        <taxon>Pentatomomorpha</taxon>
        <taxon>Pentatomoidea</taxon>
        <taxon>Pentatomidae</taxon>
        <taxon>Pentatominae</taxon>
        <taxon>Acrosternum</taxon>
    </lineage>
</organism>
<evidence type="ECO:0000269" key="1">
    <source>
    </source>
</evidence>
<evidence type="ECO:0000303" key="2">
    <source>
    </source>
</evidence>
<evidence type="ECO:0000305" key="3"/>
<keyword id="KW-0027">Amidation</keyword>
<keyword id="KW-0903">Direct protein sequencing</keyword>
<keyword id="KW-0527">Neuropeptide</keyword>
<keyword id="KW-0964">Secreted</keyword>
<feature type="peptide" id="PRO_0000395630" description="Tachykinin-related peptide 5" evidence="1">
    <location>
        <begin position="1"/>
        <end position="10"/>
    </location>
</feature>
<feature type="modified residue" description="Arginine amide" evidence="1">
    <location>
        <position position="10"/>
    </location>
</feature>
<comment type="subcellular location">
    <subcellularLocation>
        <location evidence="1 3">Secreted</location>
    </subcellularLocation>
</comment>
<comment type="tissue specificity">
    <text evidence="1">Expressed in the antennal lobe (at protein level).</text>
</comment>
<protein>
    <recommendedName>
        <fullName evidence="2">Tachykinin-related peptide 5</fullName>
        <shortName evidence="2">TKRP-5</shortName>
    </recommendedName>
</protein>
<name>TRP5_ACRHI</name>